<keyword id="KW-0963">Cytoplasm</keyword>
<keyword id="KW-0489">Methyltransferase</keyword>
<keyword id="KW-0949">S-adenosyl-L-methionine</keyword>
<keyword id="KW-0808">Transferase</keyword>
<proteinExistence type="inferred from homology"/>
<organism>
    <name type="scientific">Klebsiella pneumoniae (strain 342)</name>
    <dbReference type="NCBI Taxonomy" id="507522"/>
    <lineage>
        <taxon>Bacteria</taxon>
        <taxon>Pseudomonadati</taxon>
        <taxon>Pseudomonadota</taxon>
        <taxon>Gammaproteobacteria</taxon>
        <taxon>Enterobacterales</taxon>
        <taxon>Enterobacteriaceae</taxon>
        <taxon>Klebsiella/Raoultella group</taxon>
        <taxon>Klebsiella</taxon>
        <taxon>Klebsiella pneumoniae complex</taxon>
    </lineage>
</organism>
<gene>
    <name evidence="1" type="primary">prmA</name>
    <name type="ordered locus">KPK_0449</name>
</gene>
<reference key="1">
    <citation type="journal article" date="2008" name="PLoS Genet.">
        <title>Complete genome sequence of the N2-fixing broad host range endophyte Klebsiella pneumoniae 342 and virulence predictions verified in mice.</title>
        <authorList>
            <person name="Fouts D.E."/>
            <person name="Tyler H.L."/>
            <person name="DeBoy R.T."/>
            <person name="Daugherty S."/>
            <person name="Ren Q."/>
            <person name="Badger J.H."/>
            <person name="Durkin A.S."/>
            <person name="Huot H."/>
            <person name="Shrivastava S."/>
            <person name="Kothari S."/>
            <person name="Dodson R.J."/>
            <person name="Mohamoud Y."/>
            <person name="Khouri H."/>
            <person name="Roesch L.F.W."/>
            <person name="Krogfelt K.A."/>
            <person name="Struve C."/>
            <person name="Triplett E.W."/>
            <person name="Methe B.A."/>
        </authorList>
    </citation>
    <scope>NUCLEOTIDE SEQUENCE [LARGE SCALE GENOMIC DNA]</scope>
    <source>
        <strain>342</strain>
    </source>
</reference>
<protein>
    <recommendedName>
        <fullName evidence="1">Ribosomal protein L11 methyltransferase</fullName>
        <shortName evidence="1">L11 Mtase</shortName>
        <ecNumber evidence="1">2.1.1.-</ecNumber>
    </recommendedName>
</protein>
<sequence>MPWIQLKLNTTGANAEDLSDALMEAGSVSITFQDTHDTPVFEPLPGETRLWGDTDVIGLFDAETDMKAVVAQLEQHPLLGAGFAHKIEQLEDKDWEREWMDNFHPMRFGERLWICPSWRDVPDENAVNVMLDPGLAFGTGTHPTTAMCLQWLDGLDLQGKTVIDFGCGSGILAIAALKLGAAKAIGIDIDPQAIQASRDNAQRNGVSERLELYLPQDQPEAMKADVVVANILAGPLRELAPLISVLPVTGGLLGLSGILASQAESVCEAYAPLFTLDPVVEKEEWCRITGRKN</sequence>
<name>PRMA_KLEP3</name>
<feature type="chain" id="PRO_1000192637" description="Ribosomal protein L11 methyltransferase">
    <location>
        <begin position="1"/>
        <end position="293"/>
    </location>
</feature>
<feature type="binding site" evidence="1">
    <location>
        <position position="145"/>
    </location>
    <ligand>
        <name>S-adenosyl-L-methionine</name>
        <dbReference type="ChEBI" id="CHEBI:59789"/>
    </ligand>
</feature>
<feature type="binding site" evidence="1">
    <location>
        <position position="166"/>
    </location>
    <ligand>
        <name>S-adenosyl-L-methionine</name>
        <dbReference type="ChEBI" id="CHEBI:59789"/>
    </ligand>
</feature>
<feature type="binding site" evidence="1">
    <location>
        <position position="188"/>
    </location>
    <ligand>
        <name>S-adenosyl-L-methionine</name>
        <dbReference type="ChEBI" id="CHEBI:59789"/>
    </ligand>
</feature>
<feature type="binding site" evidence="1">
    <location>
        <position position="230"/>
    </location>
    <ligand>
        <name>S-adenosyl-L-methionine</name>
        <dbReference type="ChEBI" id="CHEBI:59789"/>
    </ligand>
</feature>
<comment type="function">
    <text evidence="1">Methylates ribosomal protein L11.</text>
</comment>
<comment type="catalytic activity">
    <reaction evidence="1">
        <text>L-lysyl-[protein] + 3 S-adenosyl-L-methionine = N(6),N(6),N(6)-trimethyl-L-lysyl-[protein] + 3 S-adenosyl-L-homocysteine + 3 H(+)</text>
        <dbReference type="Rhea" id="RHEA:54192"/>
        <dbReference type="Rhea" id="RHEA-COMP:9752"/>
        <dbReference type="Rhea" id="RHEA-COMP:13826"/>
        <dbReference type="ChEBI" id="CHEBI:15378"/>
        <dbReference type="ChEBI" id="CHEBI:29969"/>
        <dbReference type="ChEBI" id="CHEBI:57856"/>
        <dbReference type="ChEBI" id="CHEBI:59789"/>
        <dbReference type="ChEBI" id="CHEBI:61961"/>
    </reaction>
</comment>
<comment type="subcellular location">
    <subcellularLocation>
        <location evidence="1">Cytoplasm</location>
    </subcellularLocation>
</comment>
<comment type="similarity">
    <text evidence="1">Belongs to the methyltransferase superfamily. PrmA family.</text>
</comment>
<dbReference type="EC" id="2.1.1.-" evidence="1"/>
<dbReference type="EMBL" id="CP000964">
    <property type="protein sequence ID" value="ACI08080.1"/>
    <property type="molecule type" value="Genomic_DNA"/>
</dbReference>
<dbReference type="SMR" id="B5XND9"/>
<dbReference type="KEGG" id="kpe:KPK_0449"/>
<dbReference type="HOGENOM" id="CLU_049382_4_1_6"/>
<dbReference type="Proteomes" id="UP000001734">
    <property type="component" value="Chromosome"/>
</dbReference>
<dbReference type="GO" id="GO:0005829">
    <property type="term" value="C:cytosol"/>
    <property type="evidence" value="ECO:0007669"/>
    <property type="project" value="TreeGrafter"/>
</dbReference>
<dbReference type="GO" id="GO:0016279">
    <property type="term" value="F:protein-lysine N-methyltransferase activity"/>
    <property type="evidence" value="ECO:0007669"/>
    <property type="project" value="TreeGrafter"/>
</dbReference>
<dbReference type="GO" id="GO:0032259">
    <property type="term" value="P:methylation"/>
    <property type="evidence" value="ECO:0007669"/>
    <property type="project" value="UniProtKB-KW"/>
</dbReference>
<dbReference type="CDD" id="cd02440">
    <property type="entry name" value="AdoMet_MTases"/>
    <property type="match status" value="1"/>
</dbReference>
<dbReference type="FunFam" id="3.40.50.150:FF:000021">
    <property type="entry name" value="Ribosomal protein L11 methyltransferase"/>
    <property type="match status" value="1"/>
</dbReference>
<dbReference type="Gene3D" id="3.40.50.150">
    <property type="entry name" value="Vaccinia Virus protein VP39"/>
    <property type="match status" value="1"/>
</dbReference>
<dbReference type="HAMAP" id="MF_00735">
    <property type="entry name" value="Methyltr_PrmA"/>
    <property type="match status" value="1"/>
</dbReference>
<dbReference type="InterPro" id="IPR050078">
    <property type="entry name" value="Ribosomal_L11_MeTrfase_PrmA"/>
</dbReference>
<dbReference type="InterPro" id="IPR004498">
    <property type="entry name" value="Ribosomal_PrmA_MeTrfase"/>
</dbReference>
<dbReference type="InterPro" id="IPR029063">
    <property type="entry name" value="SAM-dependent_MTases_sf"/>
</dbReference>
<dbReference type="NCBIfam" id="TIGR00406">
    <property type="entry name" value="prmA"/>
    <property type="match status" value="1"/>
</dbReference>
<dbReference type="PANTHER" id="PTHR43648">
    <property type="entry name" value="ELECTRON TRANSFER FLAVOPROTEIN BETA SUBUNIT LYSINE METHYLTRANSFERASE"/>
    <property type="match status" value="1"/>
</dbReference>
<dbReference type="PANTHER" id="PTHR43648:SF1">
    <property type="entry name" value="ELECTRON TRANSFER FLAVOPROTEIN BETA SUBUNIT LYSINE METHYLTRANSFERASE"/>
    <property type="match status" value="1"/>
</dbReference>
<dbReference type="Pfam" id="PF06325">
    <property type="entry name" value="PrmA"/>
    <property type="match status" value="1"/>
</dbReference>
<dbReference type="PIRSF" id="PIRSF000401">
    <property type="entry name" value="RPL11_MTase"/>
    <property type="match status" value="1"/>
</dbReference>
<dbReference type="SUPFAM" id="SSF53335">
    <property type="entry name" value="S-adenosyl-L-methionine-dependent methyltransferases"/>
    <property type="match status" value="1"/>
</dbReference>
<accession>B5XND9</accession>
<evidence type="ECO:0000255" key="1">
    <source>
        <dbReference type="HAMAP-Rule" id="MF_00735"/>
    </source>
</evidence>